<comment type="function">
    <text evidence="1">Catalyzes the phospholipid dependent N-acylation of the N-terminal cysteine of apolipoprotein, the last step in lipoprotein maturation.</text>
</comment>
<comment type="catalytic activity">
    <reaction evidence="1">
        <text>N-terminal S-1,2-diacyl-sn-glyceryl-L-cysteinyl-[lipoprotein] + a glycerophospholipid = N-acyl-S-1,2-diacyl-sn-glyceryl-L-cysteinyl-[lipoprotein] + a 2-acyl-sn-glycero-3-phospholipid + H(+)</text>
        <dbReference type="Rhea" id="RHEA:48228"/>
        <dbReference type="Rhea" id="RHEA-COMP:14681"/>
        <dbReference type="Rhea" id="RHEA-COMP:14684"/>
        <dbReference type="ChEBI" id="CHEBI:15378"/>
        <dbReference type="ChEBI" id="CHEBI:136912"/>
        <dbReference type="ChEBI" id="CHEBI:140656"/>
        <dbReference type="ChEBI" id="CHEBI:140657"/>
        <dbReference type="ChEBI" id="CHEBI:140660"/>
        <dbReference type="EC" id="2.3.1.269"/>
    </reaction>
</comment>
<comment type="pathway">
    <text evidence="1">Protein modification; lipoprotein biosynthesis (N-acyl transfer).</text>
</comment>
<comment type="subcellular location">
    <subcellularLocation>
        <location evidence="1">Cell inner membrane</location>
        <topology evidence="1">Multi-pass membrane protein</topology>
    </subcellularLocation>
</comment>
<comment type="similarity">
    <text evidence="1">Belongs to the CN hydrolase family. Apolipoprotein N-acyltransferase subfamily.</text>
</comment>
<evidence type="ECO:0000255" key="1">
    <source>
        <dbReference type="HAMAP-Rule" id="MF_01148"/>
    </source>
</evidence>
<sequence length="517" mass="57565">MTKKSFFSLGRLLLAVPAGAIATLTFAPYNYWLLAPVSIALLLWLLQAQTVKRSGLIGFLWGLGLFGTGISWVHVSIDTFGGMPKIASVFLMSSLISYLALYPAAFGALFNRFNRGRPFHQLMLSGPVIWLLLDWVRGWALTGFPWLWMGYGQIDSPLASLAPILGVEGITLALVLISGALVASVVYRNWKPLMVPVLIMALTWAANTVSWVVPDPTKNLDVALIQGNVPQELKWLPSERWPTLMKYTDLTRENWDADIIVWPEAAIPALEAHLPTFLQNLDSAARNNNSTVITGVLDQKEDGQYFNNILTLGKNAYGPYQYDKATRYSKHHLLPFGEFVPFGDLLRPIAPLFNLPMSSFSRGDLVQPNLEASGYSIAPALCYEVAFSEQVRKNVNIDTDLLLTLSNDAWFGTSIGPFQHMEIAQMRALELGKPLIRSTNTGITAVVDHTGQIIKQIPQFETAVLRATITPTEGLTPYTTLGSWPLYFYSLWSLTLSMILIRRRSGRFRDTRPVETE</sequence>
<dbReference type="EC" id="2.3.1.269" evidence="1"/>
<dbReference type="EMBL" id="CR378672">
    <property type="protein sequence ID" value="CAG21225.1"/>
    <property type="molecule type" value="Genomic_DNA"/>
</dbReference>
<dbReference type="RefSeq" id="WP_011219497.1">
    <property type="nucleotide sequence ID" value="NC_006370.1"/>
</dbReference>
<dbReference type="SMR" id="Q6LNA1"/>
<dbReference type="STRING" id="298386.PBPRA2882"/>
<dbReference type="KEGG" id="ppr:PBPRA2882"/>
<dbReference type="eggNOG" id="COG0815">
    <property type="taxonomic scope" value="Bacteria"/>
</dbReference>
<dbReference type="HOGENOM" id="CLU_019563_3_0_6"/>
<dbReference type="UniPathway" id="UPA00666"/>
<dbReference type="Proteomes" id="UP000000593">
    <property type="component" value="Chromosome 1"/>
</dbReference>
<dbReference type="GO" id="GO:0005886">
    <property type="term" value="C:plasma membrane"/>
    <property type="evidence" value="ECO:0007669"/>
    <property type="project" value="UniProtKB-SubCell"/>
</dbReference>
<dbReference type="GO" id="GO:0016410">
    <property type="term" value="F:N-acyltransferase activity"/>
    <property type="evidence" value="ECO:0007669"/>
    <property type="project" value="UniProtKB-UniRule"/>
</dbReference>
<dbReference type="GO" id="GO:0042158">
    <property type="term" value="P:lipoprotein biosynthetic process"/>
    <property type="evidence" value="ECO:0007669"/>
    <property type="project" value="UniProtKB-UniRule"/>
</dbReference>
<dbReference type="CDD" id="cd07571">
    <property type="entry name" value="ALP_N-acyl_transferase"/>
    <property type="match status" value="1"/>
</dbReference>
<dbReference type="Gene3D" id="3.60.110.10">
    <property type="entry name" value="Carbon-nitrogen hydrolase"/>
    <property type="match status" value="1"/>
</dbReference>
<dbReference type="HAMAP" id="MF_01148">
    <property type="entry name" value="Lnt"/>
    <property type="match status" value="1"/>
</dbReference>
<dbReference type="InterPro" id="IPR004563">
    <property type="entry name" value="Apolipo_AcylTrfase"/>
</dbReference>
<dbReference type="InterPro" id="IPR003010">
    <property type="entry name" value="C-N_Hydrolase"/>
</dbReference>
<dbReference type="InterPro" id="IPR036526">
    <property type="entry name" value="C-N_Hydrolase_sf"/>
</dbReference>
<dbReference type="InterPro" id="IPR045378">
    <property type="entry name" value="LNT_N"/>
</dbReference>
<dbReference type="NCBIfam" id="TIGR00546">
    <property type="entry name" value="lnt"/>
    <property type="match status" value="1"/>
</dbReference>
<dbReference type="PANTHER" id="PTHR38686">
    <property type="entry name" value="APOLIPOPROTEIN N-ACYLTRANSFERASE"/>
    <property type="match status" value="1"/>
</dbReference>
<dbReference type="PANTHER" id="PTHR38686:SF1">
    <property type="entry name" value="APOLIPOPROTEIN N-ACYLTRANSFERASE"/>
    <property type="match status" value="1"/>
</dbReference>
<dbReference type="Pfam" id="PF00795">
    <property type="entry name" value="CN_hydrolase"/>
    <property type="match status" value="1"/>
</dbReference>
<dbReference type="Pfam" id="PF20154">
    <property type="entry name" value="LNT_N"/>
    <property type="match status" value="1"/>
</dbReference>
<dbReference type="SUPFAM" id="SSF56317">
    <property type="entry name" value="Carbon-nitrogen hydrolase"/>
    <property type="match status" value="1"/>
</dbReference>
<dbReference type="PROSITE" id="PS50263">
    <property type="entry name" value="CN_HYDROLASE"/>
    <property type="match status" value="1"/>
</dbReference>
<reference key="1">
    <citation type="journal article" date="2005" name="Science">
        <title>Life at depth: Photobacterium profundum genome sequence and expression analysis.</title>
        <authorList>
            <person name="Vezzi A."/>
            <person name="Campanaro S."/>
            <person name="D'Angelo M."/>
            <person name="Simonato F."/>
            <person name="Vitulo N."/>
            <person name="Lauro F.M."/>
            <person name="Cestaro A."/>
            <person name="Malacrida G."/>
            <person name="Simionati B."/>
            <person name="Cannata N."/>
            <person name="Romualdi C."/>
            <person name="Bartlett D.H."/>
            <person name="Valle G."/>
        </authorList>
    </citation>
    <scope>NUCLEOTIDE SEQUENCE [LARGE SCALE GENOMIC DNA]</scope>
    <source>
        <strain>ATCC BAA-1253 / SS9</strain>
    </source>
</reference>
<accession>Q6LNA1</accession>
<organism>
    <name type="scientific">Photobacterium profundum (strain SS9)</name>
    <dbReference type="NCBI Taxonomy" id="298386"/>
    <lineage>
        <taxon>Bacteria</taxon>
        <taxon>Pseudomonadati</taxon>
        <taxon>Pseudomonadota</taxon>
        <taxon>Gammaproteobacteria</taxon>
        <taxon>Vibrionales</taxon>
        <taxon>Vibrionaceae</taxon>
        <taxon>Photobacterium</taxon>
    </lineage>
</organism>
<feature type="chain" id="PRO_1000085090" description="Apolipoprotein N-acyltransferase">
    <location>
        <begin position="1"/>
        <end position="517"/>
    </location>
</feature>
<feature type="transmembrane region" description="Helical" evidence="1">
    <location>
        <begin position="5"/>
        <end position="25"/>
    </location>
</feature>
<feature type="transmembrane region" description="Helical" evidence="1">
    <location>
        <begin position="26"/>
        <end position="46"/>
    </location>
</feature>
<feature type="transmembrane region" description="Helical" evidence="1">
    <location>
        <begin position="55"/>
        <end position="75"/>
    </location>
</feature>
<feature type="transmembrane region" description="Helical" evidence="1">
    <location>
        <begin position="90"/>
        <end position="110"/>
    </location>
</feature>
<feature type="transmembrane region" description="Helical" evidence="1">
    <location>
        <begin position="128"/>
        <end position="148"/>
    </location>
</feature>
<feature type="transmembrane region" description="Helical" evidence="1">
    <location>
        <begin position="162"/>
        <end position="182"/>
    </location>
</feature>
<feature type="transmembrane region" description="Helical" evidence="1">
    <location>
        <begin position="193"/>
        <end position="213"/>
    </location>
</feature>
<feature type="domain" description="CN hydrolase" evidence="1">
    <location>
        <begin position="225"/>
        <end position="471"/>
    </location>
</feature>
<feature type="active site" description="Proton acceptor" evidence="1">
    <location>
        <position position="264"/>
    </location>
</feature>
<feature type="active site" evidence="1">
    <location>
        <position position="330"/>
    </location>
</feature>
<feature type="active site" description="Nucleophile" evidence="1">
    <location>
        <position position="382"/>
    </location>
</feature>
<proteinExistence type="inferred from homology"/>
<keyword id="KW-0012">Acyltransferase</keyword>
<keyword id="KW-0997">Cell inner membrane</keyword>
<keyword id="KW-1003">Cell membrane</keyword>
<keyword id="KW-0472">Membrane</keyword>
<keyword id="KW-1185">Reference proteome</keyword>
<keyword id="KW-0808">Transferase</keyword>
<keyword id="KW-0812">Transmembrane</keyword>
<keyword id="KW-1133">Transmembrane helix</keyword>
<name>LNT_PHOPR</name>
<gene>
    <name evidence="1" type="primary">lnt</name>
    <name type="ordered locus">PBPRA2882</name>
</gene>
<protein>
    <recommendedName>
        <fullName evidence="1">Apolipoprotein N-acyltransferase</fullName>
        <shortName evidence="1">ALP N-acyltransferase</shortName>
        <ecNumber evidence="1">2.3.1.269</ecNumber>
    </recommendedName>
</protein>